<feature type="chain" id="PRO_0000104572" description="Serpentine receptor class gamma-47">
    <location>
        <begin position="1"/>
        <end position="309"/>
    </location>
</feature>
<feature type="transmembrane region" description="Helical" evidence="1">
    <location>
        <begin position="22"/>
        <end position="42"/>
    </location>
</feature>
<feature type="transmembrane region" description="Helical" evidence="1">
    <location>
        <begin position="140"/>
        <end position="160"/>
    </location>
</feature>
<feature type="transmembrane region" description="Helical" evidence="1">
    <location>
        <begin position="190"/>
        <end position="210"/>
    </location>
</feature>
<feature type="transmembrane region" description="Helical" evidence="1">
    <location>
        <begin position="230"/>
        <end position="250"/>
    </location>
</feature>
<feature type="transmembrane region" description="Helical" evidence="1">
    <location>
        <begin position="272"/>
        <end position="292"/>
    </location>
</feature>
<protein>
    <recommendedName>
        <fullName>Serpentine receptor class gamma-47</fullName>
        <shortName>Protein srg-47</shortName>
    </recommendedName>
</protein>
<evidence type="ECO:0000255" key="1"/>
<evidence type="ECO:0000305" key="2"/>
<proteinExistence type="inferred from homology"/>
<comment type="subcellular location">
    <subcellularLocation>
        <location evidence="2">Membrane</location>
        <topology evidence="2">Multi-pass membrane protein</topology>
    </subcellularLocation>
</comment>
<comment type="similarity">
    <text evidence="2">Belongs to the nematode receptor-like protein srg family.</text>
</comment>
<sequence>MSEILIVPLKEKMSERTLWLTIVQMFYGTITVVFMLILLFLFQFSKKFSYSFYRILQLDLITNILCNLNSLFSVRFQNHLMFLPVLEFLENSIPGFLSISSRGKFLFFHLQFFTALSMNIHRISSVTHPVGHGEFWTKYFKLYYVILCGISIFFTSVLPLESHRIEMENGTLIEISNHSMTTWTLNIYAIYSSVYFIILLLVGIISIFYISRKVEQVSTRSREVARKLSLITLVYGFLYSGILLWSILMALNRYFQFCPPSFGYIFNMSLGISSDLITLSLPYILLIFDVGIRKLFCRKRRKVGAMNVP</sequence>
<accession>O17699</accession>
<name>SRG47_CAEEL</name>
<reference key="1">
    <citation type="journal article" date="1998" name="Science">
        <title>Genome sequence of the nematode C. elegans: a platform for investigating biology.</title>
        <authorList>
            <consortium name="The C. elegans sequencing consortium"/>
        </authorList>
    </citation>
    <scope>NUCLEOTIDE SEQUENCE [LARGE SCALE GENOMIC DNA]</scope>
    <source>
        <strain>Bristol N2</strain>
    </source>
</reference>
<dbReference type="EMBL" id="Z81486">
    <property type="protein sequence ID" value="CAB03988.2"/>
    <property type="molecule type" value="Genomic_DNA"/>
</dbReference>
<dbReference type="PIR" id="T20167">
    <property type="entry name" value="T20167"/>
</dbReference>
<dbReference type="RefSeq" id="NP_506604.2">
    <property type="nucleotide sequence ID" value="NM_074203.2"/>
</dbReference>
<dbReference type="FunCoup" id="O17699">
    <property type="interactions" value="21"/>
</dbReference>
<dbReference type="STRING" id="6239.C53A5.8.1"/>
<dbReference type="PaxDb" id="6239-C53A5.8"/>
<dbReference type="EnsemblMetazoa" id="C53A5.8.1">
    <property type="protein sequence ID" value="C53A5.8.1"/>
    <property type="gene ID" value="WBGene00005204"/>
</dbReference>
<dbReference type="GeneID" id="183738"/>
<dbReference type="KEGG" id="cel:CELE_C53A5.8"/>
<dbReference type="UCSC" id="C53A5.8">
    <property type="organism name" value="c. elegans"/>
</dbReference>
<dbReference type="AGR" id="WB:WBGene00005204"/>
<dbReference type="CTD" id="183738"/>
<dbReference type="WormBase" id="C53A5.8">
    <property type="protein sequence ID" value="CE33042"/>
    <property type="gene ID" value="WBGene00005204"/>
    <property type="gene designation" value="srg-47"/>
</dbReference>
<dbReference type="eggNOG" id="ENOG502TJPW">
    <property type="taxonomic scope" value="Eukaryota"/>
</dbReference>
<dbReference type="GeneTree" id="ENSGT00970000195850"/>
<dbReference type="HOGENOM" id="CLU_076972_0_0_1"/>
<dbReference type="InParanoid" id="O17699"/>
<dbReference type="OMA" id="INTHYQL"/>
<dbReference type="OrthoDB" id="5864862at2759"/>
<dbReference type="PhylomeDB" id="O17699"/>
<dbReference type="PRO" id="PR:O17699"/>
<dbReference type="Proteomes" id="UP000001940">
    <property type="component" value="Chromosome V"/>
</dbReference>
<dbReference type="GO" id="GO:0005929">
    <property type="term" value="C:cilium"/>
    <property type="evidence" value="ECO:0000314"/>
    <property type="project" value="UniProtKB"/>
</dbReference>
<dbReference type="GO" id="GO:0016020">
    <property type="term" value="C:membrane"/>
    <property type="evidence" value="ECO:0007669"/>
    <property type="project" value="UniProtKB-SubCell"/>
</dbReference>
<dbReference type="GO" id="GO:0004888">
    <property type="term" value="F:transmembrane signaling receptor activity"/>
    <property type="evidence" value="ECO:0007669"/>
    <property type="project" value="InterPro"/>
</dbReference>
<dbReference type="GO" id="GO:0007606">
    <property type="term" value="P:sensory perception of chemical stimulus"/>
    <property type="evidence" value="ECO:0007669"/>
    <property type="project" value="InterPro"/>
</dbReference>
<dbReference type="Gene3D" id="1.20.1070.10">
    <property type="entry name" value="Rhodopsin 7-helix transmembrane proteins"/>
    <property type="match status" value="1"/>
</dbReference>
<dbReference type="InterPro" id="IPR000609">
    <property type="entry name" value="7TM_GPCR_serpentine_rcpt_Srg"/>
</dbReference>
<dbReference type="InterPro" id="IPR052880">
    <property type="entry name" value="NRL-Serpentine_Class_Gamma"/>
</dbReference>
<dbReference type="PANTHER" id="PTHR31114">
    <property type="entry name" value="SERPENTINE RECEPTOR CLASS GAMMA"/>
    <property type="match status" value="1"/>
</dbReference>
<dbReference type="PANTHER" id="PTHR31114:SF3">
    <property type="entry name" value="SERPENTINE RECEPTOR CLASS GAMMA-RELATED"/>
    <property type="match status" value="1"/>
</dbReference>
<dbReference type="Pfam" id="PF02118">
    <property type="entry name" value="Srg"/>
    <property type="match status" value="1"/>
</dbReference>
<dbReference type="SUPFAM" id="SSF81321">
    <property type="entry name" value="Family A G protein-coupled receptor-like"/>
    <property type="match status" value="1"/>
</dbReference>
<keyword id="KW-0472">Membrane</keyword>
<keyword id="KW-1185">Reference proteome</keyword>
<keyword id="KW-0812">Transmembrane</keyword>
<keyword id="KW-1133">Transmembrane helix</keyword>
<organism>
    <name type="scientific">Caenorhabditis elegans</name>
    <dbReference type="NCBI Taxonomy" id="6239"/>
    <lineage>
        <taxon>Eukaryota</taxon>
        <taxon>Metazoa</taxon>
        <taxon>Ecdysozoa</taxon>
        <taxon>Nematoda</taxon>
        <taxon>Chromadorea</taxon>
        <taxon>Rhabditida</taxon>
        <taxon>Rhabditina</taxon>
        <taxon>Rhabditomorpha</taxon>
        <taxon>Rhabditoidea</taxon>
        <taxon>Rhabditidae</taxon>
        <taxon>Peloderinae</taxon>
        <taxon>Caenorhabditis</taxon>
    </lineage>
</organism>
<gene>
    <name type="primary">srg-47</name>
    <name type="ORF">C53A5.8</name>
</gene>